<evidence type="ECO:0000250" key="1"/>
<evidence type="ECO:0000255" key="2">
    <source>
        <dbReference type="PROSITE-ProRule" id="PRU01021"/>
    </source>
</evidence>
<evidence type="ECO:0000269" key="3">
    <source>
    </source>
</evidence>
<sequence length="418" mass="47979">MISFLVQKSEAKYWKDVVQNKNKFLKNIGIISGPKLVDTYSNQFEADFLKKCVLIPTSYNKEDLPKDILDCPRIYLIEEEVKSVQTDEKLQIKVLRYVSQILHTTVSEEQYPVPSRFVIYPPLALLSLNSFGTKEWHLFFQSYANVDVKAGLFDIFAREWNVSHIAINEPIPVGDVMRRPLSLKPLYGDFGVLIDGNPSEQDFQKAFWVSCRQNGIYQTWAPLYTMFSRGNSIEKARVLNFSYIKDEIIADLYAGIGYFTFSYVKAGASTVFCWEINPWSVEALRRAALKNGWSIYVVRNGENYEFKVGTHRIVVFLESNVYAAERFSKMNISARHINLGMLPSSEKSWSTATSILKRESHSFIHVHENVKDEDIETYSSEVNSCFSKMLAKNTVCVTNCVKSFSPRVSHIVYDIETV</sequence>
<comment type="function">
    <text evidence="1">S-adenosyl-L-methionine-dependent transferase that acts as a component of the wybutosine biosynthesis pathway. Wybutosine is a hyper modified guanosine with a tricyclic base found at the 3'-position adjacent to the anticodon of eukaryotic phenylalanine tRNA. Catalyzes the transfer of the alpha-amino-alpha-carboxypropyl (acp) group from S-adenosyl-L-methionine to the C-7 position of 4-demethylwyosine (imG-14) to produce wybutosine-86 (By similarity).</text>
</comment>
<comment type="catalytic activity">
    <reaction>
        <text>4-demethylwyosine(37) in tRNA(Phe) + S-adenosyl-L-methionine = 4-demethyl-7-[(3S)-3-amino-3-carboxypropyl]wyosine(37) in tRNA(Phe) + S-methyl-5'-thioadenosine + H(+)</text>
        <dbReference type="Rhea" id="RHEA:36355"/>
        <dbReference type="Rhea" id="RHEA-COMP:10164"/>
        <dbReference type="Rhea" id="RHEA-COMP:10378"/>
        <dbReference type="ChEBI" id="CHEBI:15378"/>
        <dbReference type="ChEBI" id="CHEBI:17509"/>
        <dbReference type="ChEBI" id="CHEBI:59789"/>
        <dbReference type="ChEBI" id="CHEBI:64315"/>
        <dbReference type="ChEBI" id="CHEBI:73550"/>
        <dbReference type="EC" id="2.5.1.114"/>
    </reaction>
</comment>
<comment type="pathway">
    <text>tRNA modification; wybutosine-tRNA(Phe) biosynthesis.</text>
</comment>
<comment type="subcellular location">
    <subcellularLocation>
        <location evidence="3">Cytoplasm</location>
    </subcellularLocation>
    <subcellularLocation>
        <location evidence="3">Nucleus</location>
    </subcellularLocation>
</comment>
<comment type="similarity">
    <text evidence="2">Belongs to the class I-like SAM-binding methyltransferase superfamily. TRM5/TYW2 family.</text>
</comment>
<gene>
    <name type="primary">trm12</name>
    <name type="synonym">tyw2</name>
    <name type="ORF">SPAC4G8.06c</name>
</gene>
<protein>
    <recommendedName>
        <fullName>tRNA wybutosine-synthesizing protein 2</fullName>
        <shortName>tRNA-yW-synthesizing protein 2</shortName>
        <ecNumber>2.5.1.114</ecNumber>
    </recommendedName>
    <alternativeName>
        <fullName>tRNA(Phe) (4-demethylwyosine(37)-C(7)) aminocarboxypropyltransferase</fullName>
    </alternativeName>
</protein>
<feature type="chain" id="PRO_0000116416" description="tRNA wybutosine-synthesizing protein 2">
    <location>
        <begin position="1"/>
        <end position="418"/>
    </location>
</feature>
<feature type="binding site" evidence="2">
    <location>
        <position position="228"/>
    </location>
    <ligand>
        <name>S-adenosyl-L-methionine</name>
        <dbReference type="ChEBI" id="CHEBI:59789"/>
    </ligand>
</feature>
<feature type="binding site" evidence="2">
    <location>
        <position position="235"/>
    </location>
    <ligand>
        <name>S-adenosyl-L-methionine</name>
        <dbReference type="ChEBI" id="CHEBI:59789"/>
    </ligand>
</feature>
<feature type="binding site" evidence="2">
    <location>
        <begin position="275"/>
        <end position="276"/>
    </location>
    <ligand>
        <name>S-adenosyl-L-methionine</name>
        <dbReference type="ChEBI" id="CHEBI:59789"/>
    </ligand>
</feature>
<feature type="binding site" evidence="2">
    <location>
        <begin position="302"/>
        <end position="303"/>
    </location>
    <ligand>
        <name>S-adenosyl-L-methionine</name>
        <dbReference type="ChEBI" id="CHEBI:59789"/>
    </ligand>
</feature>
<name>TYW2_SCHPO</name>
<organism>
    <name type="scientific">Schizosaccharomyces pombe (strain 972 / ATCC 24843)</name>
    <name type="common">Fission yeast</name>
    <dbReference type="NCBI Taxonomy" id="284812"/>
    <lineage>
        <taxon>Eukaryota</taxon>
        <taxon>Fungi</taxon>
        <taxon>Dikarya</taxon>
        <taxon>Ascomycota</taxon>
        <taxon>Taphrinomycotina</taxon>
        <taxon>Schizosaccharomycetes</taxon>
        <taxon>Schizosaccharomycetales</taxon>
        <taxon>Schizosaccharomycetaceae</taxon>
        <taxon>Schizosaccharomyces</taxon>
    </lineage>
</organism>
<proteinExistence type="inferred from homology"/>
<dbReference type="EC" id="2.5.1.114"/>
<dbReference type="EMBL" id="CU329670">
    <property type="protein sequence ID" value="CAA91207.1"/>
    <property type="molecule type" value="Genomic_DNA"/>
</dbReference>
<dbReference type="PIR" id="T38851">
    <property type="entry name" value="S62483"/>
</dbReference>
<dbReference type="RefSeq" id="NP_593066.1">
    <property type="nucleotide sequence ID" value="NM_001018464.2"/>
</dbReference>
<dbReference type="SMR" id="Q09832"/>
<dbReference type="BioGRID" id="279968">
    <property type="interactions" value="21"/>
</dbReference>
<dbReference type="FunCoup" id="Q09832">
    <property type="interactions" value="397"/>
</dbReference>
<dbReference type="STRING" id="284812.Q09832"/>
<dbReference type="PaxDb" id="4896-SPAC4G8.06c.1"/>
<dbReference type="EnsemblFungi" id="SPAC4G8.06c.1">
    <property type="protein sequence ID" value="SPAC4G8.06c.1:pep"/>
    <property type="gene ID" value="SPAC4G8.06c"/>
</dbReference>
<dbReference type="GeneID" id="2543551"/>
<dbReference type="KEGG" id="spo:2543551"/>
<dbReference type="PomBase" id="SPAC4G8.06c">
    <property type="gene designation" value="trm12"/>
</dbReference>
<dbReference type="VEuPathDB" id="FungiDB:SPAC4G8.06c"/>
<dbReference type="eggNOG" id="KOG1227">
    <property type="taxonomic scope" value="Eukaryota"/>
</dbReference>
<dbReference type="HOGENOM" id="CLU_023588_1_0_1"/>
<dbReference type="InParanoid" id="Q09832"/>
<dbReference type="OMA" id="NAFWVHC"/>
<dbReference type="PhylomeDB" id="Q09832"/>
<dbReference type="UniPathway" id="UPA00375"/>
<dbReference type="PRO" id="PR:Q09832"/>
<dbReference type="Proteomes" id="UP000002485">
    <property type="component" value="Chromosome I"/>
</dbReference>
<dbReference type="GO" id="GO:0005737">
    <property type="term" value="C:cytoplasm"/>
    <property type="evidence" value="ECO:0000318"/>
    <property type="project" value="GO_Central"/>
</dbReference>
<dbReference type="GO" id="GO:0005829">
    <property type="term" value="C:cytosol"/>
    <property type="evidence" value="ECO:0007005"/>
    <property type="project" value="PomBase"/>
</dbReference>
<dbReference type="GO" id="GO:0005634">
    <property type="term" value="C:nucleus"/>
    <property type="evidence" value="ECO:0007005"/>
    <property type="project" value="PomBase"/>
</dbReference>
<dbReference type="GO" id="GO:0008757">
    <property type="term" value="F:S-adenosylmethionine-dependent methyltransferase activity"/>
    <property type="evidence" value="ECO:0007669"/>
    <property type="project" value="InterPro"/>
</dbReference>
<dbReference type="GO" id="GO:0102522">
    <property type="term" value="F:tRNA 4-demethylwyosine alpha-amino-alpha-carboxypropyltransferase activity"/>
    <property type="evidence" value="ECO:0000266"/>
    <property type="project" value="PomBase"/>
</dbReference>
<dbReference type="GO" id="GO:0008175">
    <property type="term" value="F:tRNA methyltransferase activity"/>
    <property type="evidence" value="ECO:0000318"/>
    <property type="project" value="GO_Central"/>
</dbReference>
<dbReference type="GO" id="GO:0030488">
    <property type="term" value="P:tRNA methylation"/>
    <property type="evidence" value="ECO:0000318"/>
    <property type="project" value="GO_Central"/>
</dbReference>
<dbReference type="GO" id="GO:0031591">
    <property type="term" value="P:wybutosine biosynthetic process"/>
    <property type="evidence" value="ECO:0000318"/>
    <property type="project" value="GO_Central"/>
</dbReference>
<dbReference type="Gene3D" id="3.40.50.150">
    <property type="entry name" value="Vaccinia Virus protein VP39"/>
    <property type="match status" value="1"/>
</dbReference>
<dbReference type="InterPro" id="IPR030382">
    <property type="entry name" value="MeTrfase_TRM5/TYW2"/>
</dbReference>
<dbReference type="InterPro" id="IPR029063">
    <property type="entry name" value="SAM-dependent_MTases_sf"/>
</dbReference>
<dbReference type="InterPro" id="IPR056743">
    <property type="entry name" value="TRM5-TYW2-like_MTfase"/>
</dbReference>
<dbReference type="InterPro" id="IPR026274">
    <property type="entry name" value="tRNA_wybutosine_synth_prot_2"/>
</dbReference>
<dbReference type="PANTHER" id="PTHR23245">
    <property type="entry name" value="TRNA METHYLTRANSFERASE"/>
    <property type="match status" value="1"/>
</dbReference>
<dbReference type="PANTHER" id="PTHR23245:SF25">
    <property type="entry name" value="TRNA WYBUTOSINE-SYNTHESIZING PROTEIN 2 HOMOLOG"/>
    <property type="match status" value="1"/>
</dbReference>
<dbReference type="Pfam" id="PF02475">
    <property type="entry name" value="TRM5-TYW2_MTfase"/>
    <property type="match status" value="1"/>
</dbReference>
<dbReference type="PIRSF" id="PIRSF038972">
    <property type="entry name" value="Trm12"/>
    <property type="match status" value="1"/>
</dbReference>
<dbReference type="SUPFAM" id="SSF53335">
    <property type="entry name" value="S-adenosyl-L-methionine-dependent methyltransferases"/>
    <property type="match status" value="1"/>
</dbReference>
<dbReference type="PROSITE" id="PS51684">
    <property type="entry name" value="SAM_MT_TRM5_TYW2"/>
    <property type="match status" value="1"/>
</dbReference>
<accession>Q09832</accession>
<reference key="1">
    <citation type="journal article" date="2002" name="Nature">
        <title>The genome sequence of Schizosaccharomyces pombe.</title>
        <authorList>
            <person name="Wood V."/>
            <person name="Gwilliam R."/>
            <person name="Rajandream M.A."/>
            <person name="Lyne M.H."/>
            <person name="Lyne R."/>
            <person name="Stewart A."/>
            <person name="Sgouros J.G."/>
            <person name="Peat N."/>
            <person name="Hayles J."/>
            <person name="Baker S.G."/>
            <person name="Basham D."/>
            <person name="Bowman S."/>
            <person name="Brooks K."/>
            <person name="Brown D."/>
            <person name="Brown S."/>
            <person name="Chillingworth T."/>
            <person name="Churcher C.M."/>
            <person name="Collins M."/>
            <person name="Connor R."/>
            <person name="Cronin A."/>
            <person name="Davis P."/>
            <person name="Feltwell T."/>
            <person name="Fraser A."/>
            <person name="Gentles S."/>
            <person name="Goble A."/>
            <person name="Hamlin N."/>
            <person name="Harris D.E."/>
            <person name="Hidalgo J."/>
            <person name="Hodgson G."/>
            <person name="Holroyd S."/>
            <person name="Hornsby T."/>
            <person name="Howarth S."/>
            <person name="Huckle E.J."/>
            <person name="Hunt S."/>
            <person name="Jagels K."/>
            <person name="James K.D."/>
            <person name="Jones L."/>
            <person name="Jones M."/>
            <person name="Leather S."/>
            <person name="McDonald S."/>
            <person name="McLean J."/>
            <person name="Mooney P."/>
            <person name="Moule S."/>
            <person name="Mungall K.L."/>
            <person name="Murphy L.D."/>
            <person name="Niblett D."/>
            <person name="Odell C."/>
            <person name="Oliver K."/>
            <person name="O'Neil S."/>
            <person name="Pearson D."/>
            <person name="Quail M.A."/>
            <person name="Rabbinowitsch E."/>
            <person name="Rutherford K.M."/>
            <person name="Rutter S."/>
            <person name="Saunders D."/>
            <person name="Seeger K."/>
            <person name="Sharp S."/>
            <person name="Skelton J."/>
            <person name="Simmonds M.N."/>
            <person name="Squares R."/>
            <person name="Squares S."/>
            <person name="Stevens K."/>
            <person name="Taylor K."/>
            <person name="Taylor R.G."/>
            <person name="Tivey A."/>
            <person name="Walsh S.V."/>
            <person name="Warren T."/>
            <person name="Whitehead S."/>
            <person name="Woodward J.R."/>
            <person name="Volckaert G."/>
            <person name="Aert R."/>
            <person name="Robben J."/>
            <person name="Grymonprez B."/>
            <person name="Weltjens I."/>
            <person name="Vanstreels E."/>
            <person name="Rieger M."/>
            <person name="Schaefer M."/>
            <person name="Mueller-Auer S."/>
            <person name="Gabel C."/>
            <person name="Fuchs M."/>
            <person name="Duesterhoeft A."/>
            <person name="Fritzc C."/>
            <person name="Holzer E."/>
            <person name="Moestl D."/>
            <person name="Hilbert H."/>
            <person name="Borzym K."/>
            <person name="Langer I."/>
            <person name="Beck A."/>
            <person name="Lehrach H."/>
            <person name="Reinhardt R."/>
            <person name="Pohl T.M."/>
            <person name="Eger P."/>
            <person name="Zimmermann W."/>
            <person name="Wedler H."/>
            <person name="Wambutt R."/>
            <person name="Purnelle B."/>
            <person name="Goffeau A."/>
            <person name="Cadieu E."/>
            <person name="Dreano S."/>
            <person name="Gloux S."/>
            <person name="Lelaure V."/>
            <person name="Mottier S."/>
            <person name="Galibert F."/>
            <person name="Aves S.J."/>
            <person name="Xiang Z."/>
            <person name="Hunt C."/>
            <person name="Moore K."/>
            <person name="Hurst S.M."/>
            <person name="Lucas M."/>
            <person name="Rochet M."/>
            <person name="Gaillardin C."/>
            <person name="Tallada V.A."/>
            <person name="Garzon A."/>
            <person name="Thode G."/>
            <person name="Daga R.R."/>
            <person name="Cruzado L."/>
            <person name="Jimenez J."/>
            <person name="Sanchez M."/>
            <person name="del Rey F."/>
            <person name="Benito J."/>
            <person name="Dominguez A."/>
            <person name="Revuelta J.L."/>
            <person name="Moreno S."/>
            <person name="Armstrong J."/>
            <person name="Forsburg S.L."/>
            <person name="Cerutti L."/>
            <person name="Lowe T."/>
            <person name="McCombie W.R."/>
            <person name="Paulsen I."/>
            <person name="Potashkin J."/>
            <person name="Shpakovski G.V."/>
            <person name="Ussery D."/>
            <person name="Barrell B.G."/>
            <person name="Nurse P."/>
        </authorList>
    </citation>
    <scope>NUCLEOTIDE SEQUENCE [LARGE SCALE GENOMIC DNA]</scope>
    <source>
        <strain>972 / ATCC 24843</strain>
    </source>
</reference>
<reference key="2">
    <citation type="journal article" date="2006" name="Nat. Biotechnol.">
        <title>ORFeome cloning and global analysis of protein localization in the fission yeast Schizosaccharomyces pombe.</title>
        <authorList>
            <person name="Matsuyama A."/>
            <person name="Arai R."/>
            <person name="Yashiroda Y."/>
            <person name="Shirai A."/>
            <person name="Kamata A."/>
            <person name="Sekido S."/>
            <person name="Kobayashi Y."/>
            <person name="Hashimoto A."/>
            <person name="Hamamoto M."/>
            <person name="Hiraoka Y."/>
            <person name="Horinouchi S."/>
            <person name="Yoshida M."/>
        </authorList>
    </citation>
    <scope>SUBCELLULAR LOCATION [LARGE SCALE ANALYSIS]</scope>
</reference>
<keyword id="KW-0963">Cytoplasm</keyword>
<keyword id="KW-0539">Nucleus</keyword>
<keyword id="KW-1185">Reference proteome</keyword>
<keyword id="KW-0949">S-adenosyl-L-methionine</keyword>
<keyword id="KW-0808">Transferase</keyword>
<keyword id="KW-0819">tRNA processing</keyword>